<sequence>MANVEKPNDCSGFPVVDLNSCFSNGFNNEKQEIEMETDDSPILLMSSSASRENSNTFSVIQRTPDGKIITTNNNMNSKINKQLDKLPENLRLNGRTPSGKLRSFVCEVCTRAFARQEHLKRHYRSHTNEKPYPCGLCNRCFTRRDLLIRHAQKIHSGNLGETISHTKKVSRTITKARKNSASSVKFQTPTYGTPDNGNFLNRTTANTRRKASPEANVKRKYLKKLTRRASFSAQSASSYALPDQSSLEQHPKDRVKFSTPELVPLDLKNPELDSSFDLNMNLDLNLNLDSNFNIALNRSDSSGSTMNLDYKLPESANNYTYSSGSPTRAYVGANTNSKNASFNDADLLSSSYWIKAYNDHLFSVSESDETSPMNSELNDTKLIVPDFKSTIHHLKDSRSSSWTVAIDNNSNNNKVSDNQPDFVDFQELLDNDTLGNDLLETTAVLKEFELLHDDSVSATATSNEIDLSHLNLSNSPISPHKLIYKNKEGTNDDMLISFGLDHPSNREDDLDKLCNMTRDVQAIFSQYLKGEESKRSLEDFLSTSNRKEKPDSGNYTFYGLDCLTLSKISRALPASTVNNNQPSHSIESKLFNEPMRNMCIKVLRYYEKFSHDSSESVMDSNPNLLSKELLMPAVSELNEYLDLFKNNFLPHFPIIHPSLLDLDLDSLQRYTNEDGYDDAENAQLFDRLSQGTDKEYDYEHYQILSISKIVCLPLFMATFGSLHKFGYKSQTIELYEMSRRILHSFLETKRRCRSTTVNDSYQNIWLMQSLILSFMFALVADYLEKIDSSLMKRQLSALCSTIRSNCLPTISANSEKSINNNNEPLTFGSPLQYIIFESKIRCTLMAYDFCQFLKCFFHIKFDLSIKEKDVETIYIPDNESKWASESIICNGHVVQKQNFYDFRNFYYSFTYGHLHSIPEFLGSSMIYYEYDLRKGTKSHVFLDRIDTKRLERSLDTSSYGNDNMAATNKNIAILIDDTIILKNNLMSMRFIKQIDRSFTEKVRKGQIAKIYDSFLNSVRLNFLKNYSVEVLCEFLVALNFSIRNISSLYVEEESDCSQRMNSPELPRIHLNNQALSVFNLQGYYYCFILIIKFLLDFEATPNFKLLRIFIELRSLANSILLPTLSRLYPQEFSGFPDVVFTQQFINKDNGMLVPGLSANEHHNGASAAVKTKLAKKINVEGLAMFINEILVNSFNDTSFLNMEDPIRNEFSFDNGDRAVTDLPRSAHFLSDTGLEGINFSGLNDSHQTVSTLNLLRYGENHSSKHKNGGKGQGFAEKYQLSLKYVTIAKLFFTNVKENYIHCHMLDKMASDFHTLENHLKGNS</sequence>
<protein>
    <recommendedName>
        <fullName>Regulatory protein ADR1</fullName>
    </recommendedName>
</protein>
<proteinExistence type="evidence at protein level"/>
<reference key="1">
    <citation type="journal article" date="1986" name="Nature">
        <title>Sequence homology of the yeast regulatory protein ADR1 with Xenopus transcription factor TFIIIA.</title>
        <authorList>
            <person name="Hartshorne T.A."/>
            <person name="Blumberg H."/>
            <person name="Young E.T."/>
        </authorList>
    </citation>
    <scope>NUCLEOTIDE SEQUENCE [GENOMIC DNA]</scope>
</reference>
<reference key="2">
    <citation type="journal article" date="1997" name="Nature">
        <title>The nucleotide sequence of Saccharomyces cerevisiae chromosome IV.</title>
        <authorList>
            <person name="Jacq C."/>
            <person name="Alt-Moerbe J."/>
            <person name="Andre B."/>
            <person name="Arnold W."/>
            <person name="Bahr A."/>
            <person name="Ballesta J.P.G."/>
            <person name="Bargues M."/>
            <person name="Baron L."/>
            <person name="Becker A."/>
            <person name="Biteau N."/>
            <person name="Bloecker H."/>
            <person name="Blugeon C."/>
            <person name="Boskovic J."/>
            <person name="Brandt P."/>
            <person name="Brueckner M."/>
            <person name="Buitrago M.J."/>
            <person name="Coster F."/>
            <person name="Delaveau T."/>
            <person name="del Rey F."/>
            <person name="Dujon B."/>
            <person name="Eide L.G."/>
            <person name="Garcia-Cantalejo J.M."/>
            <person name="Goffeau A."/>
            <person name="Gomez-Peris A."/>
            <person name="Granotier C."/>
            <person name="Hanemann V."/>
            <person name="Hankeln T."/>
            <person name="Hoheisel J.D."/>
            <person name="Jaeger W."/>
            <person name="Jimenez A."/>
            <person name="Jonniaux J.-L."/>
            <person name="Kraemer C."/>
            <person name="Kuester H."/>
            <person name="Laamanen P."/>
            <person name="Legros Y."/>
            <person name="Louis E.J."/>
            <person name="Moeller-Rieker S."/>
            <person name="Monnet A."/>
            <person name="Moro M."/>
            <person name="Mueller-Auer S."/>
            <person name="Nussbaumer B."/>
            <person name="Paricio N."/>
            <person name="Paulin L."/>
            <person name="Perea J."/>
            <person name="Perez-Alonso M."/>
            <person name="Perez-Ortin J.E."/>
            <person name="Pohl T.M."/>
            <person name="Prydz H."/>
            <person name="Purnelle B."/>
            <person name="Rasmussen S.W."/>
            <person name="Remacha M.A."/>
            <person name="Revuelta J.L."/>
            <person name="Rieger M."/>
            <person name="Salom D."/>
            <person name="Saluz H.P."/>
            <person name="Saiz J.E."/>
            <person name="Saren A.-M."/>
            <person name="Schaefer M."/>
            <person name="Scharfe M."/>
            <person name="Schmidt E.R."/>
            <person name="Schneider C."/>
            <person name="Scholler P."/>
            <person name="Schwarz S."/>
            <person name="Soler-Mira A."/>
            <person name="Urrestarazu L.A."/>
            <person name="Verhasselt P."/>
            <person name="Vissers S."/>
            <person name="Voet M."/>
            <person name="Volckaert G."/>
            <person name="Wagner G."/>
            <person name="Wambutt R."/>
            <person name="Wedler E."/>
            <person name="Wedler H."/>
            <person name="Woelfl S."/>
            <person name="Harris D.E."/>
            <person name="Bowman S."/>
            <person name="Brown D."/>
            <person name="Churcher C.M."/>
            <person name="Connor R."/>
            <person name="Dedman K."/>
            <person name="Gentles S."/>
            <person name="Hamlin N."/>
            <person name="Hunt S."/>
            <person name="Jones L."/>
            <person name="McDonald S."/>
            <person name="Murphy L.D."/>
            <person name="Niblett D."/>
            <person name="Odell C."/>
            <person name="Oliver K."/>
            <person name="Rajandream M.A."/>
            <person name="Richards C."/>
            <person name="Shore L."/>
            <person name="Walsh S.V."/>
            <person name="Barrell B.G."/>
            <person name="Dietrich F.S."/>
            <person name="Mulligan J.T."/>
            <person name="Allen E."/>
            <person name="Araujo R."/>
            <person name="Aviles E."/>
            <person name="Berno A."/>
            <person name="Carpenter J."/>
            <person name="Chen E."/>
            <person name="Cherry J.M."/>
            <person name="Chung E."/>
            <person name="Duncan M."/>
            <person name="Hunicke-Smith S."/>
            <person name="Hyman R.W."/>
            <person name="Komp C."/>
            <person name="Lashkari D."/>
            <person name="Lew H."/>
            <person name="Lin D."/>
            <person name="Mosedale D."/>
            <person name="Nakahara K."/>
            <person name="Namath A."/>
            <person name="Oefner P."/>
            <person name="Oh C."/>
            <person name="Petel F.X."/>
            <person name="Roberts D."/>
            <person name="Schramm S."/>
            <person name="Schroeder M."/>
            <person name="Shogren T."/>
            <person name="Shroff N."/>
            <person name="Winant A."/>
            <person name="Yelton M.A."/>
            <person name="Botstein D."/>
            <person name="Davis R.W."/>
            <person name="Johnston M."/>
            <person name="Andrews S."/>
            <person name="Brinkman R."/>
            <person name="Cooper J."/>
            <person name="Ding H."/>
            <person name="Du Z."/>
            <person name="Favello A."/>
            <person name="Fulton L."/>
            <person name="Gattung S."/>
            <person name="Greco T."/>
            <person name="Hallsworth K."/>
            <person name="Hawkins J."/>
            <person name="Hillier L.W."/>
            <person name="Jier M."/>
            <person name="Johnson D."/>
            <person name="Johnston L."/>
            <person name="Kirsten J."/>
            <person name="Kucaba T."/>
            <person name="Langston Y."/>
            <person name="Latreille P."/>
            <person name="Le T."/>
            <person name="Mardis E."/>
            <person name="Menezes S."/>
            <person name="Miller N."/>
            <person name="Nhan M."/>
            <person name="Pauley A."/>
            <person name="Peluso D."/>
            <person name="Rifkin L."/>
            <person name="Riles L."/>
            <person name="Taich A."/>
            <person name="Trevaskis E."/>
            <person name="Vignati D."/>
            <person name="Wilcox L."/>
            <person name="Wohldman P."/>
            <person name="Vaudin M."/>
            <person name="Wilson R."/>
            <person name="Waterston R."/>
            <person name="Albermann K."/>
            <person name="Hani J."/>
            <person name="Heumann K."/>
            <person name="Kleine K."/>
            <person name="Mewes H.-W."/>
            <person name="Zollner A."/>
            <person name="Zaccaria P."/>
        </authorList>
    </citation>
    <scope>NUCLEOTIDE SEQUENCE [LARGE SCALE GENOMIC DNA]</scope>
    <source>
        <strain>ATCC 204508 / S288c</strain>
    </source>
</reference>
<reference key="3">
    <citation type="journal article" date="2014" name="G3 (Bethesda)">
        <title>The reference genome sequence of Saccharomyces cerevisiae: Then and now.</title>
        <authorList>
            <person name="Engel S.R."/>
            <person name="Dietrich F.S."/>
            <person name="Fisk D.G."/>
            <person name="Binkley G."/>
            <person name="Balakrishnan R."/>
            <person name="Costanzo M.C."/>
            <person name="Dwight S.S."/>
            <person name="Hitz B.C."/>
            <person name="Karra K."/>
            <person name="Nash R.S."/>
            <person name="Weng S."/>
            <person name="Wong E.D."/>
            <person name="Lloyd P."/>
            <person name="Skrzypek M.S."/>
            <person name="Miyasato S.R."/>
            <person name="Simison M."/>
            <person name="Cherry J.M."/>
        </authorList>
    </citation>
    <scope>GENOME REANNOTATION</scope>
    <source>
        <strain>ATCC 204508 / S288c</strain>
    </source>
</reference>
<reference key="4">
    <citation type="journal article" date="2007" name="J. Proteome Res.">
        <title>Large-scale phosphorylation analysis of alpha-factor-arrested Saccharomyces cerevisiae.</title>
        <authorList>
            <person name="Li X."/>
            <person name="Gerber S.A."/>
            <person name="Rudner A.D."/>
            <person name="Beausoleil S.A."/>
            <person name="Haas W."/>
            <person name="Villen J."/>
            <person name="Elias J.E."/>
            <person name="Gygi S.P."/>
        </authorList>
    </citation>
    <scope>IDENTIFICATION BY MASS SPECTROMETRY [LARGE SCALE ANALYSIS]</scope>
    <source>
        <strain>ADR376</strain>
    </source>
</reference>
<reference key="5">
    <citation type="journal article" date="2007" name="Proc. Natl. Acad. Sci. U.S.A.">
        <title>Analysis of phosphorylation sites on proteins from Saccharomyces cerevisiae by electron transfer dissociation (ETD) mass spectrometry.</title>
        <authorList>
            <person name="Chi A."/>
            <person name="Huttenhower C."/>
            <person name="Geer L.Y."/>
            <person name="Coon J.J."/>
            <person name="Syka J.E.P."/>
            <person name="Bai D.L."/>
            <person name="Shabanowitz J."/>
            <person name="Burke D.J."/>
            <person name="Troyanskaya O.G."/>
            <person name="Hunt D.F."/>
        </authorList>
    </citation>
    <scope>PHOSPHORYLATION [LARGE SCALE ANALYSIS] AT SER-230</scope>
    <scope>IDENTIFICATION BY MASS SPECTROMETRY [LARGE SCALE ANALYSIS]</scope>
</reference>
<reference key="6">
    <citation type="journal article" date="2008" name="Mol. Cell. Proteomics">
        <title>A multidimensional chromatography technology for in-depth phosphoproteome analysis.</title>
        <authorList>
            <person name="Albuquerque C.P."/>
            <person name="Smolka M.B."/>
            <person name="Payne S.H."/>
            <person name="Bafna V."/>
            <person name="Eng J."/>
            <person name="Zhou H."/>
        </authorList>
    </citation>
    <scope>PHOSPHORYLATION [LARGE SCALE ANALYSIS] AT SER-323 AND THR-327</scope>
    <scope>IDENTIFICATION BY MASS SPECTROMETRY [LARGE SCALE ANALYSIS]</scope>
</reference>
<reference key="7">
    <citation type="journal article" date="2009" name="Science">
        <title>Global analysis of Cdk1 substrate phosphorylation sites provides insights into evolution.</title>
        <authorList>
            <person name="Holt L.J."/>
            <person name="Tuch B.B."/>
            <person name="Villen J."/>
            <person name="Johnson A.D."/>
            <person name="Gygi S.P."/>
            <person name="Morgan D.O."/>
        </authorList>
    </citation>
    <scope>PHOSPHORYLATION [LARGE SCALE ANALYSIS] AT SER-54; THR-188; THR-193; SER-230; SER-258; THR-259; SER-299 AND SER-325</scope>
    <scope>IDENTIFICATION BY MASS SPECTROMETRY [LARGE SCALE ANALYSIS]</scope>
</reference>
<reference key="8">
    <citation type="journal article" date="1988" name="Science">
        <title>Zinc-dependent structure of a single-finger domain of yeast ADR1.</title>
        <authorList>
            <person name="Parraga G."/>
            <person name="Horvath S.J."/>
            <person name="Eisen A."/>
            <person name="Taylor W.E."/>
            <person name="Hood L."/>
            <person name="Young E.T."/>
            <person name="Klevit R.E."/>
        </authorList>
    </citation>
    <scope>STRUCTURE BY NMR OF ZINC-FINGERS</scope>
</reference>
<reference key="9">
    <citation type="journal article" date="1991" name="Biochemistry">
        <title>ADR1a, a zinc finger peptide, exists in two folded conformations.</title>
        <authorList>
            <person name="Xu R.X."/>
            <person name="Horvath S.J."/>
            <person name="Klevit R.E."/>
        </authorList>
    </citation>
    <scope>STRUCTURE BY NMR OF 131-159</scope>
</reference>
<reference key="10">
    <citation type="journal article" date="1999" name="Nat. Struct. Biol.">
        <title>A folding transition and novel zinc finger accessory domain in the transcription factor ADR1.</title>
        <authorList>
            <person name="Bowers P.M."/>
            <person name="Schaufler L.E."/>
            <person name="Klevit R.E."/>
        </authorList>
    </citation>
    <scope>STRUCTURE BY NMR OF 102-161</scope>
</reference>
<reference key="11">
    <citation type="journal article" date="1987" name="Nature">
        <title>Two zinc fingers of a yeast regulatory protein shown by genetic evidence to be essential for its function.</title>
        <authorList>
            <person name="Blumberg H."/>
            <person name="Eisen A."/>
            <person name="Sledziewski A."/>
            <person name="Bader D."/>
            <person name="Young E.T."/>
        </authorList>
    </citation>
    <scope>MUTAGENESIS</scope>
</reference>
<reference key="12">
    <citation type="journal article" date="1991" name="Proc. Natl. Acad. Sci. U.S.A.">
        <title>Alanine scanning site-directed mutagenesis of the zinc fingers of transcription factor ADR1: residues that contact DNA and that transactivate.</title>
        <authorList>
            <person name="Thukral S.K."/>
            <person name="Morrison M.L."/>
            <person name="Young E.T."/>
        </authorList>
    </citation>
    <scope>MUTAGENESIS</scope>
</reference>
<reference key="13">
    <citation type="journal article" date="1992" name="Mol. Cell. Biol.">
        <title>Mutations in the zinc fingers of ADR1 that change the specificity of DNA binding and transactivation.</title>
        <authorList>
            <person name="Thukral S.K."/>
            <person name="Morrison M.L."/>
            <person name="Young E.T."/>
        </authorList>
    </citation>
    <scope>MUTAGENESIS</scope>
</reference>
<reference key="14">
    <citation type="journal article" date="1992" name="Mol. Cell. Biol.">
        <title>ADR1c mutations enhance the ability of ADR1 to activate transcription by a mechanism that is independent of effects on cyclic AMP-dependent protein kinase phosphorylation of Ser-230.</title>
        <authorList>
            <person name="Denis C.L."/>
            <person name="Fontaine S.C."/>
            <person name="Chase D."/>
            <person name="Kemp B.E."/>
            <person name="Bemis L.T."/>
        </authorList>
    </citation>
    <scope>MUTAGENESIS</scope>
    <scope>PHOSPHORYLATION AT SER-230</scope>
</reference>
<reference key="15">
    <citation type="journal article" date="1992" name="Mol. Cell. Biol.">
        <title>A mutation outside the two zinc fingers of ADR1 can suppress defects in either finger.</title>
        <authorList>
            <person name="Camier S."/>
            <person name="Kacherovsky N."/>
            <person name="Young E.T."/>
        </authorList>
    </citation>
    <scope>MUTAGENESIS</scope>
</reference>
<reference key="16">
    <citation type="journal article" date="1994" name="J. Biol. Chem.">
        <title>Mutations in the zinc-finger region of the yeast regulatory protein ADR1 affect both DNA binding and transcriptional activation.</title>
        <authorList>
            <person name="Cook W.J."/>
            <person name="Mosley S.P."/>
            <person name="Audino D.C."/>
            <person name="Mullaney D.L."/>
            <person name="Rovelli A."/>
            <person name="Stewart G."/>
            <person name="Denis C.L."/>
        </authorList>
    </citation>
    <scope>MUTAGENESIS</scope>
</reference>
<keyword id="KW-0002">3D-structure</keyword>
<keyword id="KW-0010">Activator</keyword>
<keyword id="KW-0238">DNA-binding</keyword>
<keyword id="KW-0479">Metal-binding</keyword>
<keyword id="KW-0539">Nucleus</keyword>
<keyword id="KW-0597">Phosphoprotein</keyword>
<keyword id="KW-1185">Reference proteome</keyword>
<keyword id="KW-0677">Repeat</keyword>
<keyword id="KW-0804">Transcription</keyword>
<keyword id="KW-0805">Transcription regulation</keyword>
<keyword id="KW-0862">Zinc</keyword>
<keyword id="KW-0863">Zinc-finger</keyword>
<comment type="function">
    <text>Required for transcriptional activation of glucose-repressible alcohol dehydrogenase (ADH2).</text>
</comment>
<comment type="subcellular location">
    <subcellularLocation>
        <location>Nucleus</location>
    </subcellularLocation>
</comment>
<comment type="PTM">
    <text evidence="3">Phosphorylation at Ser-230 by cAMP-dependent protein kinase A does not affect DNA binding but appears to prevent transcription of ADH2 during glucose repression.</text>
</comment>
<organism>
    <name type="scientific">Saccharomyces cerevisiae (strain ATCC 204508 / S288c)</name>
    <name type="common">Baker's yeast</name>
    <dbReference type="NCBI Taxonomy" id="559292"/>
    <lineage>
        <taxon>Eukaryota</taxon>
        <taxon>Fungi</taxon>
        <taxon>Dikarya</taxon>
        <taxon>Ascomycota</taxon>
        <taxon>Saccharomycotina</taxon>
        <taxon>Saccharomycetes</taxon>
        <taxon>Saccharomycetales</taxon>
        <taxon>Saccharomycetaceae</taxon>
        <taxon>Saccharomyces</taxon>
    </lineage>
</organism>
<gene>
    <name type="primary">ADR1</name>
    <name type="ordered locus">YDR216W</name>
    <name type="ORF">YD8142.16</name>
    <name type="ORF">YD8142B.08</name>
</gene>
<evidence type="ECO:0000255" key="1">
    <source>
        <dbReference type="PROSITE-ProRule" id="PRU00042"/>
    </source>
</evidence>
<evidence type="ECO:0000256" key="2">
    <source>
        <dbReference type="SAM" id="MobiDB-lite"/>
    </source>
</evidence>
<evidence type="ECO:0000269" key="3">
    <source>
    </source>
</evidence>
<evidence type="ECO:0000305" key="4"/>
<evidence type="ECO:0007744" key="5">
    <source>
    </source>
</evidence>
<evidence type="ECO:0007744" key="6">
    <source>
    </source>
</evidence>
<evidence type="ECO:0007744" key="7">
    <source>
    </source>
</evidence>
<evidence type="ECO:0007829" key="8">
    <source>
        <dbReference type="PDB" id="1ARD"/>
    </source>
</evidence>
<evidence type="ECO:0007829" key="9">
    <source>
        <dbReference type="PDB" id="1ARF"/>
    </source>
</evidence>
<evidence type="ECO:0007829" key="10">
    <source>
        <dbReference type="PDB" id="1PAA"/>
    </source>
</evidence>
<evidence type="ECO:0007829" key="11">
    <source>
        <dbReference type="PDB" id="2ADR"/>
    </source>
</evidence>
<dbReference type="EMBL" id="U28414">
    <property type="protein sequence ID" value="AAA73863.1"/>
    <property type="molecule type" value="Genomic_DNA"/>
</dbReference>
<dbReference type="EMBL" id="Z48612">
    <property type="protein sequence ID" value="CAA88496.1"/>
    <property type="molecule type" value="Genomic_DNA"/>
</dbReference>
<dbReference type="EMBL" id="Z68194">
    <property type="protein sequence ID" value="CAA92359.1"/>
    <property type="molecule type" value="Genomic_DNA"/>
</dbReference>
<dbReference type="EMBL" id="Z68195">
    <property type="protein sequence ID" value="CAA92367.1"/>
    <property type="molecule type" value="Genomic_DNA"/>
</dbReference>
<dbReference type="EMBL" id="BK006938">
    <property type="protein sequence ID" value="DAA12059.1"/>
    <property type="molecule type" value="Genomic_DNA"/>
</dbReference>
<dbReference type="PIR" id="A24534">
    <property type="entry name" value="A24534"/>
</dbReference>
<dbReference type="RefSeq" id="NP_010502.3">
    <property type="nucleotide sequence ID" value="NM_001180524.3"/>
</dbReference>
<dbReference type="PDB" id="1ARD">
    <property type="method" value="NMR"/>
    <property type="chains" value="A=102-130"/>
</dbReference>
<dbReference type="PDB" id="1ARE">
    <property type="method" value="NMR"/>
    <property type="chains" value="A=102-130"/>
</dbReference>
<dbReference type="PDB" id="1ARF">
    <property type="method" value="NMR"/>
    <property type="chains" value="A=102-130"/>
</dbReference>
<dbReference type="PDB" id="1PAA">
    <property type="method" value="NMR"/>
    <property type="chains" value="A=130-159"/>
</dbReference>
<dbReference type="PDB" id="2ADR">
    <property type="method" value="NMR"/>
    <property type="chains" value="A=102-161"/>
</dbReference>
<dbReference type="PDB" id="5A7U">
    <property type="method" value="EM"/>
    <property type="resolution" value="4.80 A"/>
    <property type="chains" value="A=130-158"/>
</dbReference>
<dbReference type="PDBsum" id="1ARD"/>
<dbReference type="PDBsum" id="1ARE"/>
<dbReference type="PDBsum" id="1ARF"/>
<dbReference type="PDBsum" id="1PAA"/>
<dbReference type="PDBsum" id="2ADR"/>
<dbReference type="PDBsum" id="5A7U"/>
<dbReference type="BMRB" id="P07248"/>
<dbReference type="EMDB" id="EMD-3079"/>
<dbReference type="SMR" id="P07248"/>
<dbReference type="BioGRID" id="32269">
    <property type="interactions" value="162"/>
</dbReference>
<dbReference type="DIP" id="DIP-7N"/>
<dbReference type="FunCoup" id="P07248">
    <property type="interactions" value="1208"/>
</dbReference>
<dbReference type="IntAct" id="P07248">
    <property type="interactions" value="37"/>
</dbReference>
<dbReference type="MINT" id="P07248"/>
<dbReference type="STRING" id="4932.YDR216W"/>
<dbReference type="iPTMnet" id="P07248"/>
<dbReference type="PaxDb" id="4932-YDR216W"/>
<dbReference type="PeptideAtlas" id="P07248"/>
<dbReference type="EnsemblFungi" id="YDR216W_mRNA">
    <property type="protein sequence ID" value="YDR216W"/>
    <property type="gene ID" value="YDR216W"/>
</dbReference>
<dbReference type="GeneID" id="851802"/>
<dbReference type="KEGG" id="sce:YDR216W"/>
<dbReference type="AGR" id="SGD:S000002624"/>
<dbReference type="SGD" id="S000002624">
    <property type="gene designation" value="ADR1"/>
</dbReference>
<dbReference type="VEuPathDB" id="FungiDB:YDR216W"/>
<dbReference type="eggNOG" id="KOG1721">
    <property type="taxonomic scope" value="Eukaryota"/>
</dbReference>
<dbReference type="HOGENOM" id="CLU_006588_0_0_1"/>
<dbReference type="InParanoid" id="P07248"/>
<dbReference type="OMA" id="KIRCTLM"/>
<dbReference type="OrthoDB" id="10018191at2759"/>
<dbReference type="BioCyc" id="YEAST:G3O-29797-MONOMER"/>
<dbReference type="BioGRID-ORCS" id="851802">
    <property type="hits" value="1 hit in 13 CRISPR screens"/>
</dbReference>
<dbReference type="EvolutionaryTrace" id="P07248"/>
<dbReference type="PRO" id="PR:P07248"/>
<dbReference type="Proteomes" id="UP000002311">
    <property type="component" value="Chromosome IV"/>
</dbReference>
<dbReference type="RNAct" id="P07248">
    <property type="molecule type" value="protein"/>
</dbReference>
<dbReference type="GO" id="GO:0000785">
    <property type="term" value="C:chromatin"/>
    <property type="evidence" value="ECO:0000318"/>
    <property type="project" value="GO_Central"/>
</dbReference>
<dbReference type="GO" id="GO:0005737">
    <property type="term" value="C:cytoplasm"/>
    <property type="evidence" value="ECO:0007005"/>
    <property type="project" value="SGD"/>
</dbReference>
<dbReference type="GO" id="GO:0005829">
    <property type="term" value="C:cytosol"/>
    <property type="evidence" value="ECO:0007005"/>
    <property type="project" value="SGD"/>
</dbReference>
<dbReference type="GO" id="GO:0005634">
    <property type="term" value="C:nucleus"/>
    <property type="evidence" value="ECO:0000314"/>
    <property type="project" value="SGD"/>
</dbReference>
<dbReference type="GO" id="GO:0000981">
    <property type="term" value="F:DNA-binding transcription factor activity, RNA polymerase II-specific"/>
    <property type="evidence" value="ECO:0000314"/>
    <property type="project" value="SGD"/>
</dbReference>
<dbReference type="GO" id="GO:0060090">
    <property type="term" value="F:molecular adaptor activity"/>
    <property type="evidence" value="ECO:0000269"/>
    <property type="project" value="DisProt"/>
</dbReference>
<dbReference type="GO" id="GO:0003676">
    <property type="term" value="F:nucleic acid binding"/>
    <property type="evidence" value="ECO:0000269"/>
    <property type="project" value="DisProt"/>
</dbReference>
<dbReference type="GO" id="GO:0000978">
    <property type="term" value="F:RNA polymerase II cis-regulatory region sequence-specific DNA binding"/>
    <property type="evidence" value="ECO:0000314"/>
    <property type="project" value="SGD"/>
</dbReference>
<dbReference type="GO" id="GO:0061629">
    <property type="term" value="F:RNA polymerase II-specific DNA-binding transcription factor binding"/>
    <property type="evidence" value="ECO:0000353"/>
    <property type="project" value="SGD"/>
</dbReference>
<dbReference type="GO" id="GO:0043565">
    <property type="term" value="F:sequence-specific DNA binding"/>
    <property type="evidence" value="ECO:0007005"/>
    <property type="project" value="SGD"/>
</dbReference>
<dbReference type="GO" id="GO:0001093">
    <property type="term" value="F:TFIIB-class transcription factor binding"/>
    <property type="evidence" value="ECO:0000314"/>
    <property type="project" value="SGD"/>
</dbReference>
<dbReference type="GO" id="GO:0001094">
    <property type="term" value="F:TFIID-class transcription factor complex binding"/>
    <property type="evidence" value="ECO:0000314"/>
    <property type="project" value="SGD"/>
</dbReference>
<dbReference type="GO" id="GO:0003713">
    <property type="term" value="F:transcription coactivator activity"/>
    <property type="evidence" value="ECO:0000353"/>
    <property type="project" value="SGD"/>
</dbReference>
<dbReference type="GO" id="GO:0008270">
    <property type="term" value="F:zinc ion binding"/>
    <property type="evidence" value="ECO:0007669"/>
    <property type="project" value="UniProtKB-KW"/>
</dbReference>
<dbReference type="GO" id="GO:0071361">
    <property type="term" value="P:cellular response to ethanol"/>
    <property type="evidence" value="ECO:0000315"/>
    <property type="project" value="SGD"/>
</dbReference>
<dbReference type="GO" id="GO:0006325">
    <property type="term" value="P:chromatin organization"/>
    <property type="evidence" value="ECO:0000314"/>
    <property type="project" value="SGD"/>
</dbReference>
<dbReference type="GO" id="GO:0007031">
    <property type="term" value="P:peroxisome organization"/>
    <property type="evidence" value="ECO:0000315"/>
    <property type="project" value="SGD"/>
</dbReference>
<dbReference type="GO" id="GO:1900066">
    <property type="term" value="P:positive regulation of ethanol catabolic process"/>
    <property type="evidence" value="ECO:0000315"/>
    <property type="project" value="SGD"/>
</dbReference>
<dbReference type="GO" id="GO:0032000">
    <property type="term" value="P:positive regulation of fatty acid beta-oxidation"/>
    <property type="evidence" value="ECO:0000315"/>
    <property type="project" value="SGD"/>
</dbReference>
<dbReference type="GO" id="GO:1900064">
    <property type="term" value="P:positive regulation of peroxisome organization"/>
    <property type="evidence" value="ECO:0000315"/>
    <property type="project" value="SGD"/>
</dbReference>
<dbReference type="GO" id="GO:0045944">
    <property type="term" value="P:positive regulation of transcription by RNA polymerase II"/>
    <property type="evidence" value="ECO:0000315"/>
    <property type="project" value="SGD"/>
</dbReference>
<dbReference type="GO" id="GO:0006357">
    <property type="term" value="P:regulation of transcription by RNA polymerase II"/>
    <property type="evidence" value="ECO:0000318"/>
    <property type="project" value="GO_Central"/>
</dbReference>
<dbReference type="DisProt" id="DP00077"/>
<dbReference type="FunFam" id="3.30.160.60:FF:000141">
    <property type="entry name" value="C2H2 zinc finger protein"/>
    <property type="match status" value="1"/>
</dbReference>
<dbReference type="Gene3D" id="3.30.160.60">
    <property type="entry name" value="Classic Zinc Finger"/>
    <property type="match status" value="2"/>
</dbReference>
<dbReference type="InterPro" id="IPR051059">
    <property type="entry name" value="VerF-like"/>
</dbReference>
<dbReference type="InterPro" id="IPR036236">
    <property type="entry name" value="Znf_C2H2_sf"/>
</dbReference>
<dbReference type="InterPro" id="IPR013087">
    <property type="entry name" value="Znf_C2H2_type"/>
</dbReference>
<dbReference type="PANTHER" id="PTHR40626">
    <property type="entry name" value="MIP31509P"/>
    <property type="match status" value="1"/>
</dbReference>
<dbReference type="PANTHER" id="PTHR40626:SF28">
    <property type="entry name" value="REGULATORY PROTEIN ADR1"/>
    <property type="match status" value="1"/>
</dbReference>
<dbReference type="Pfam" id="PF00096">
    <property type="entry name" value="zf-C2H2"/>
    <property type="match status" value="2"/>
</dbReference>
<dbReference type="SMART" id="SM00355">
    <property type="entry name" value="ZnF_C2H2"/>
    <property type="match status" value="2"/>
</dbReference>
<dbReference type="SUPFAM" id="SSF57667">
    <property type="entry name" value="beta-beta-alpha zinc fingers"/>
    <property type="match status" value="1"/>
</dbReference>
<dbReference type="PROSITE" id="PS00028">
    <property type="entry name" value="ZINC_FINGER_C2H2_1"/>
    <property type="match status" value="2"/>
</dbReference>
<dbReference type="PROSITE" id="PS50157">
    <property type="entry name" value="ZINC_FINGER_C2H2_2"/>
    <property type="match status" value="2"/>
</dbReference>
<accession>P07248</accession>
<accession>D6VSJ9</accession>
<accession>Q04919</accession>
<feature type="chain" id="PRO_0000046801" description="Regulatory protein ADR1">
    <location>
        <begin position="1"/>
        <end position="1323"/>
    </location>
</feature>
<feature type="zinc finger region" description="C2H2-type 1" evidence="1">
    <location>
        <begin position="104"/>
        <end position="126"/>
    </location>
</feature>
<feature type="zinc finger region" description="C2H2-type 2" evidence="1">
    <location>
        <begin position="132"/>
        <end position="155"/>
    </location>
</feature>
<feature type="region of interest" description="Disordered" evidence="2">
    <location>
        <begin position="175"/>
        <end position="216"/>
    </location>
</feature>
<feature type="compositionally biased region" description="Polar residues" evidence="2">
    <location>
        <begin position="179"/>
        <end position="206"/>
    </location>
</feature>
<feature type="modified residue" description="Phosphoserine" evidence="7">
    <location>
        <position position="54"/>
    </location>
</feature>
<feature type="modified residue" description="Phosphothreonine" evidence="7">
    <location>
        <position position="188"/>
    </location>
</feature>
<feature type="modified residue" description="Phosphothreonine" evidence="7">
    <location>
        <position position="193"/>
    </location>
</feature>
<feature type="modified residue" description="Phosphoserine; by PKA; in vitro" evidence="3 5 7">
    <location>
        <position position="230"/>
    </location>
</feature>
<feature type="modified residue" description="Phosphoserine" evidence="7">
    <location>
        <position position="258"/>
    </location>
</feature>
<feature type="modified residue" description="Phosphothreonine" evidence="7">
    <location>
        <position position="259"/>
    </location>
</feature>
<feature type="modified residue" description="Phosphoserine" evidence="7">
    <location>
        <position position="299"/>
    </location>
</feature>
<feature type="modified residue" description="Phosphoserine" evidence="6">
    <location>
        <position position="323"/>
    </location>
</feature>
<feature type="modified residue" description="Phosphoserine" evidence="7">
    <location>
        <position position="325"/>
    </location>
</feature>
<feature type="modified residue" description="Phosphothreonine" evidence="6">
    <location>
        <position position="327"/>
    </location>
</feature>
<feature type="mutagenesis site" description="Suppresses activity.">
    <original>C</original>
    <variation>Y</variation>
    <location>
        <position position="106"/>
    </location>
</feature>
<feature type="mutagenesis site" description="Suppresses activity.">
    <original>C</original>
    <variation>Y</variation>
    <location>
        <position position="109"/>
    </location>
</feature>
<feature type="mutagenesis site" description="Lowers activity.">
    <original>A</original>
    <variation>V</variation>
    <location>
        <position position="114"/>
    </location>
</feature>
<feature type="mutagenesis site" description="Suppresses activity.">
    <original>H</original>
    <variation>Y</variation>
    <location>
        <position position="118"/>
    </location>
</feature>
<feature type="mutagenesis site" description="Suppresses activity.">
    <original>H</original>
    <variation>Y</variation>
    <location>
        <position position="122"/>
    </location>
</feature>
<feature type="mutagenesis site" description="Suppresses activity.">
    <original>C</original>
    <variation>Y</variation>
    <location>
        <position position="134"/>
    </location>
</feature>
<feature type="mutagenesis site" description="Lowers activity.">
    <original>T</original>
    <variation>I</variation>
    <location>
        <position position="142"/>
    </location>
</feature>
<feature type="sequence conflict" description="In Ref. 1; AAA73863." evidence="4" ref="1">
    <original>D</original>
    <variation>H</variation>
    <location>
        <position position="1216"/>
    </location>
</feature>
<feature type="strand" evidence="9">
    <location>
        <begin position="104"/>
        <end position="106"/>
    </location>
</feature>
<feature type="turn" evidence="8">
    <location>
        <begin position="107"/>
        <end position="109"/>
    </location>
</feature>
<feature type="strand" evidence="9">
    <location>
        <begin position="111"/>
        <end position="115"/>
    </location>
</feature>
<feature type="helix" evidence="8">
    <location>
        <begin position="116"/>
        <end position="126"/>
    </location>
</feature>
<feature type="strand" evidence="11">
    <location>
        <begin position="131"/>
        <end position="133"/>
    </location>
</feature>
<feature type="turn" evidence="10">
    <location>
        <begin position="135"/>
        <end position="137"/>
    </location>
</feature>
<feature type="strand" evidence="10">
    <location>
        <begin position="142"/>
        <end position="144"/>
    </location>
</feature>
<feature type="helix" evidence="10">
    <location>
        <begin position="145"/>
        <end position="151"/>
    </location>
</feature>
<feature type="turn" evidence="11">
    <location>
        <begin position="152"/>
        <end position="154"/>
    </location>
</feature>
<name>ADR1_YEAST</name>